<dbReference type="EC" id="2.8.1.7" evidence="1"/>
<dbReference type="EC" id="4.4.1.16" evidence="1"/>
<dbReference type="EMBL" id="CP000308">
    <property type="protein sequence ID" value="ABG13711.1"/>
    <property type="molecule type" value="Genomic_DNA"/>
</dbReference>
<dbReference type="RefSeq" id="WP_002211805.1">
    <property type="nucleotide sequence ID" value="NZ_CP009906.1"/>
</dbReference>
<dbReference type="SMR" id="Q1C761"/>
<dbReference type="GeneID" id="57976274"/>
<dbReference type="KEGG" id="ypa:YPA_1745"/>
<dbReference type="UniPathway" id="UPA00266"/>
<dbReference type="Proteomes" id="UP000001971">
    <property type="component" value="Chromosome"/>
</dbReference>
<dbReference type="GO" id="GO:0005737">
    <property type="term" value="C:cytoplasm"/>
    <property type="evidence" value="ECO:0007669"/>
    <property type="project" value="UniProtKB-SubCell"/>
</dbReference>
<dbReference type="GO" id="GO:0031071">
    <property type="term" value="F:cysteine desulfurase activity"/>
    <property type="evidence" value="ECO:0007669"/>
    <property type="project" value="UniProtKB-UniRule"/>
</dbReference>
<dbReference type="GO" id="GO:0030170">
    <property type="term" value="F:pyridoxal phosphate binding"/>
    <property type="evidence" value="ECO:0007669"/>
    <property type="project" value="InterPro"/>
</dbReference>
<dbReference type="GO" id="GO:0009000">
    <property type="term" value="F:selenocysteine lyase activity"/>
    <property type="evidence" value="ECO:0007669"/>
    <property type="project" value="UniProtKB-UniRule"/>
</dbReference>
<dbReference type="GO" id="GO:0006534">
    <property type="term" value="P:cysteine metabolic process"/>
    <property type="evidence" value="ECO:0007669"/>
    <property type="project" value="InterPro"/>
</dbReference>
<dbReference type="CDD" id="cd06453">
    <property type="entry name" value="SufS_like"/>
    <property type="match status" value="1"/>
</dbReference>
<dbReference type="Gene3D" id="3.90.1150.10">
    <property type="entry name" value="Aspartate Aminotransferase, domain 1"/>
    <property type="match status" value="1"/>
</dbReference>
<dbReference type="Gene3D" id="3.40.640.10">
    <property type="entry name" value="Type I PLP-dependent aspartate aminotransferase-like (Major domain)"/>
    <property type="match status" value="1"/>
</dbReference>
<dbReference type="HAMAP" id="MF_01831">
    <property type="entry name" value="SufS_aminotrans_5"/>
    <property type="match status" value="1"/>
</dbReference>
<dbReference type="InterPro" id="IPR000192">
    <property type="entry name" value="Aminotrans_V_dom"/>
</dbReference>
<dbReference type="InterPro" id="IPR020578">
    <property type="entry name" value="Aminotrans_V_PyrdxlP_BS"/>
</dbReference>
<dbReference type="InterPro" id="IPR010970">
    <property type="entry name" value="Cys_dSase_SufS"/>
</dbReference>
<dbReference type="InterPro" id="IPR015424">
    <property type="entry name" value="PyrdxlP-dep_Trfase"/>
</dbReference>
<dbReference type="InterPro" id="IPR015421">
    <property type="entry name" value="PyrdxlP-dep_Trfase_major"/>
</dbReference>
<dbReference type="InterPro" id="IPR015422">
    <property type="entry name" value="PyrdxlP-dep_Trfase_small"/>
</dbReference>
<dbReference type="NCBIfam" id="NF006791">
    <property type="entry name" value="PRK09295.1"/>
    <property type="match status" value="1"/>
</dbReference>
<dbReference type="NCBIfam" id="TIGR01979">
    <property type="entry name" value="sufS"/>
    <property type="match status" value="1"/>
</dbReference>
<dbReference type="PANTHER" id="PTHR43586">
    <property type="entry name" value="CYSTEINE DESULFURASE"/>
    <property type="match status" value="1"/>
</dbReference>
<dbReference type="PANTHER" id="PTHR43586:SF25">
    <property type="entry name" value="CYSTEINE DESULFURASE"/>
    <property type="match status" value="1"/>
</dbReference>
<dbReference type="Pfam" id="PF00266">
    <property type="entry name" value="Aminotran_5"/>
    <property type="match status" value="1"/>
</dbReference>
<dbReference type="SUPFAM" id="SSF53383">
    <property type="entry name" value="PLP-dependent transferases"/>
    <property type="match status" value="1"/>
</dbReference>
<dbReference type="PROSITE" id="PS00595">
    <property type="entry name" value="AA_TRANSFER_CLASS_5"/>
    <property type="match status" value="1"/>
</dbReference>
<protein>
    <recommendedName>
        <fullName evidence="1">Cysteine desulfurase</fullName>
        <ecNumber evidence="1">2.8.1.7</ecNumber>
    </recommendedName>
    <alternativeName>
        <fullName evidence="1">Selenocysteine beta-lyase</fullName>
        <shortName evidence="1">SCL</shortName>
    </alternativeName>
    <alternativeName>
        <fullName evidence="1">Selenocysteine lyase</fullName>
        <ecNumber evidence="1">4.4.1.16</ecNumber>
    </alternativeName>
    <alternativeName>
        <fullName evidence="1">Selenocysteine reductase</fullName>
    </alternativeName>
</protein>
<proteinExistence type="inferred from homology"/>
<reference key="1">
    <citation type="journal article" date="2006" name="J. Bacteriol.">
        <title>Complete genome sequence of Yersinia pestis strains Antiqua and Nepal516: evidence of gene reduction in an emerging pathogen.</title>
        <authorList>
            <person name="Chain P.S.G."/>
            <person name="Hu P."/>
            <person name="Malfatti S.A."/>
            <person name="Radnedge L."/>
            <person name="Larimer F."/>
            <person name="Vergez L.M."/>
            <person name="Worsham P."/>
            <person name="Chu M.C."/>
            <person name="Andersen G.L."/>
        </authorList>
    </citation>
    <scope>NUCLEOTIDE SEQUENCE [LARGE SCALE GENOMIC DNA]</scope>
    <source>
        <strain>Antiqua</strain>
    </source>
</reference>
<sequence>MNFPIERVRADFPLLSRQVNGQPLVYLDSAASAQKPQAVIDKELHFYRDGYAAVHRGIHSLSAEATQQMEAVRTQVADFIHAASAEEIIFVRGTTEAINLVANSYGRHFLAAGDSIIITEMEHHANIVPWQMLAQDLGVEIRVWPLTATGELEITALAALIDDTTRLLAVTQVSNVLGTVNPIKDIVAQAKAAGLVVLVDGAQAVMHQPVDVQALGCDFYVFSGHKLYGPSGIGILYGKSALLQQMPPWEGGGAMIKTVSLTQGTTFADAPWRFEAGSPNTAGIMGLGAAIDYVTELGLLPIQQYEQSLMHYALAQLSQIKSLTLYGPTERAGVIAFNLGQHHAYDVGSFLDQYGIAIRTGHHCAMPLMAFYQVPSMCRASLALYNTREDVDRLVAGLQRIEKLLG</sequence>
<organism>
    <name type="scientific">Yersinia pestis bv. Antiqua (strain Antiqua)</name>
    <dbReference type="NCBI Taxonomy" id="360102"/>
    <lineage>
        <taxon>Bacteria</taxon>
        <taxon>Pseudomonadati</taxon>
        <taxon>Pseudomonadota</taxon>
        <taxon>Gammaproteobacteria</taxon>
        <taxon>Enterobacterales</taxon>
        <taxon>Yersiniaceae</taxon>
        <taxon>Yersinia</taxon>
    </lineage>
</organism>
<comment type="function">
    <text evidence="1">Cysteine desulfurases mobilize the sulfur from L-cysteine to yield L-alanine, an essential step in sulfur metabolism for biosynthesis of a variety of sulfur-containing biomolecules. Component of the suf operon, which is activated and required under specific conditions such as oxidative stress and iron limitation. Acts as a potent selenocysteine lyase in vitro, that mobilizes selenium from L-selenocysteine. Selenocysteine lyase activity is however unsure in vivo.</text>
</comment>
<comment type="catalytic activity">
    <reaction evidence="1">
        <text>(sulfur carrier)-H + L-cysteine = (sulfur carrier)-SH + L-alanine</text>
        <dbReference type="Rhea" id="RHEA:43892"/>
        <dbReference type="Rhea" id="RHEA-COMP:14737"/>
        <dbReference type="Rhea" id="RHEA-COMP:14739"/>
        <dbReference type="ChEBI" id="CHEBI:29917"/>
        <dbReference type="ChEBI" id="CHEBI:35235"/>
        <dbReference type="ChEBI" id="CHEBI:57972"/>
        <dbReference type="ChEBI" id="CHEBI:64428"/>
        <dbReference type="EC" id="2.8.1.7"/>
    </reaction>
</comment>
<comment type="catalytic activity">
    <reaction evidence="1">
        <text>L-selenocysteine + AH2 = hydrogenselenide + L-alanine + A + H(+)</text>
        <dbReference type="Rhea" id="RHEA:11632"/>
        <dbReference type="ChEBI" id="CHEBI:13193"/>
        <dbReference type="ChEBI" id="CHEBI:15378"/>
        <dbReference type="ChEBI" id="CHEBI:17499"/>
        <dbReference type="ChEBI" id="CHEBI:29317"/>
        <dbReference type="ChEBI" id="CHEBI:57843"/>
        <dbReference type="ChEBI" id="CHEBI:57972"/>
        <dbReference type="EC" id="4.4.1.16"/>
    </reaction>
</comment>
<comment type="cofactor">
    <cofactor evidence="1">
        <name>pyridoxal 5'-phosphate</name>
        <dbReference type="ChEBI" id="CHEBI:597326"/>
    </cofactor>
</comment>
<comment type="pathway">
    <text evidence="1">Cofactor biosynthesis; iron-sulfur cluster biosynthesis.</text>
</comment>
<comment type="subunit">
    <text evidence="1">Homodimer. Interacts with SufE and the SufBCD complex composed of SufB, SufC and SufD. The interaction with SufE is required to mediate the direct transfer of the sulfur atom from the S-sulfanylcysteine.</text>
</comment>
<comment type="subcellular location">
    <subcellularLocation>
        <location evidence="1">Cytoplasm</location>
    </subcellularLocation>
</comment>
<comment type="similarity">
    <text evidence="1">Belongs to the class-V pyridoxal-phosphate-dependent aminotransferase family. Csd subfamily.</text>
</comment>
<keyword id="KW-0963">Cytoplasm</keyword>
<keyword id="KW-0456">Lyase</keyword>
<keyword id="KW-0663">Pyridoxal phosphate</keyword>
<keyword id="KW-0808">Transferase</keyword>
<name>SUFS_YERPA</name>
<accession>Q1C761</accession>
<feature type="chain" id="PRO_1000070432" description="Cysteine desulfurase">
    <location>
        <begin position="1"/>
        <end position="406"/>
    </location>
</feature>
<feature type="active site" description="Cysteine persulfide intermediate" evidence="1">
    <location>
        <position position="364"/>
    </location>
</feature>
<feature type="modified residue" description="N6-(pyridoxal phosphate)lysine" evidence="1">
    <location>
        <position position="226"/>
    </location>
</feature>
<gene>
    <name evidence="1" type="primary">sufS</name>
    <name type="ordered locus">YPA_1745</name>
</gene>
<evidence type="ECO:0000255" key="1">
    <source>
        <dbReference type="HAMAP-Rule" id="MF_01831"/>
    </source>
</evidence>